<sequence>MKTNDIRELTTAEIETKVKALKEELFNLRFQLATGQLENPTRIREVRKAIARMKTVVREREIGINR</sequence>
<accession>C3LJ90</accession>
<reference key="1">
    <citation type="submission" date="2008-10" db="EMBL/GenBank/DDBJ databases">
        <title>Genome sequence of Bacillus anthracis str. CDC 684.</title>
        <authorList>
            <person name="Dodson R.J."/>
            <person name="Munk A.C."/>
            <person name="Brettin T."/>
            <person name="Bruce D."/>
            <person name="Detter C."/>
            <person name="Tapia R."/>
            <person name="Han C."/>
            <person name="Sutton G."/>
            <person name="Sims D."/>
        </authorList>
    </citation>
    <scope>NUCLEOTIDE SEQUENCE [LARGE SCALE GENOMIC DNA]</scope>
    <source>
        <strain>CDC 684 / NRRL 3495</strain>
    </source>
</reference>
<name>RL29_BACAC</name>
<proteinExistence type="inferred from homology"/>
<evidence type="ECO:0000255" key="1">
    <source>
        <dbReference type="HAMAP-Rule" id="MF_00374"/>
    </source>
</evidence>
<evidence type="ECO:0000305" key="2"/>
<organism>
    <name type="scientific">Bacillus anthracis (strain CDC 684 / NRRL 3495)</name>
    <dbReference type="NCBI Taxonomy" id="568206"/>
    <lineage>
        <taxon>Bacteria</taxon>
        <taxon>Bacillati</taxon>
        <taxon>Bacillota</taxon>
        <taxon>Bacilli</taxon>
        <taxon>Bacillales</taxon>
        <taxon>Bacillaceae</taxon>
        <taxon>Bacillus</taxon>
        <taxon>Bacillus cereus group</taxon>
    </lineage>
</organism>
<keyword id="KW-0687">Ribonucleoprotein</keyword>
<keyword id="KW-0689">Ribosomal protein</keyword>
<comment type="similarity">
    <text evidence="1">Belongs to the universal ribosomal protein uL29 family.</text>
</comment>
<gene>
    <name evidence="1" type="primary">rpmC</name>
    <name type="ordered locus">BAMEG_0134</name>
</gene>
<protein>
    <recommendedName>
        <fullName evidence="1">Large ribosomal subunit protein uL29</fullName>
    </recommendedName>
    <alternativeName>
        <fullName evidence="2">50S ribosomal protein L29</fullName>
    </alternativeName>
</protein>
<dbReference type="EMBL" id="CP001215">
    <property type="protein sequence ID" value="ACP15615.1"/>
    <property type="molecule type" value="Genomic_DNA"/>
</dbReference>
<dbReference type="RefSeq" id="WP_000855718.1">
    <property type="nucleotide sequence ID" value="NC_012581.1"/>
</dbReference>
<dbReference type="SMR" id="C3LJ90"/>
<dbReference type="GeneID" id="93010935"/>
<dbReference type="KEGG" id="bah:BAMEG_0134"/>
<dbReference type="HOGENOM" id="CLU_158491_5_2_9"/>
<dbReference type="GO" id="GO:0022625">
    <property type="term" value="C:cytosolic large ribosomal subunit"/>
    <property type="evidence" value="ECO:0007669"/>
    <property type="project" value="TreeGrafter"/>
</dbReference>
<dbReference type="GO" id="GO:0003735">
    <property type="term" value="F:structural constituent of ribosome"/>
    <property type="evidence" value="ECO:0007669"/>
    <property type="project" value="InterPro"/>
</dbReference>
<dbReference type="GO" id="GO:0006412">
    <property type="term" value="P:translation"/>
    <property type="evidence" value="ECO:0007669"/>
    <property type="project" value="UniProtKB-UniRule"/>
</dbReference>
<dbReference type="CDD" id="cd00427">
    <property type="entry name" value="Ribosomal_L29_HIP"/>
    <property type="match status" value="1"/>
</dbReference>
<dbReference type="FunFam" id="1.10.287.310:FF:000001">
    <property type="entry name" value="50S ribosomal protein L29"/>
    <property type="match status" value="1"/>
</dbReference>
<dbReference type="Gene3D" id="1.10.287.310">
    <property type="match status" value="1"/>
</dbReference>
<dbReference type="HAMAP" id="MF_00374">
    <property type="entry name" value="Ribosomal_uL29"/>
    <property type="match status" value="1"/>
</dbReference>
<dbReference type="InterPro" id="IPR050063">
    <property type="entry name" value="Ribosomal_protein_uL29"/>
</dbReference>
<dbReference type="InterPro" id="IPR001854">
    <property type="entry name" value="Ribosomal_uL29"/>
</dbReference>
<dbReference type="InterPro" id="IPR018254">
    <property type="entry name" value="Ribosomal_uL29_CS"/>
</dbReference>
<dbReference type="InterPro" id="IPR036049">
    <property type="entry name" value="Ribosomal_uL29_sf"/>
</dbReference>
<dbReference type="NCBIfam" id="TIGR00012">
    <property type="entry name" value="L29"/>
    <property type="match status" value="1"/>
</dbReference>
<dbReference type="PANTHER" id="PTHR10916">
    <property type="entry name" value="60S RIBOSOMAL PROTEIN L35/50S RIBOSOMAL PROTEIN L29"/>
    <property type="match status" value="1"/>
</dbReference>
<dbReference type="PANTHER" id="PTHR10916:SF0">
    <property type="entry name" value="LARGE RIBOSOMAL SUBUNIT PROTEIN UL29C"/>
    <property type="match status" value="1"/>
</dbReference>
<dbReference type="Pfam" id="PF00831">
    <property type="entry name" value="Ribosomal_L29"/>
    <property type="match status" value="1"/>
</dbReference>
<dbReference type="SUPFAM" id="SSF46561">
    <property type="entry name" value="Ribosomal protein L29 (L29p)"/>
    <property type="match status" value="1"/>
</dbReference>
<dbReference type="PROSITE" id="PS00579">
    <property type="entry name" value="RIBOSOMAL_L29"/>
    <property type="match status" value="1"/>
</dbReference>
<feature type="chain" id="PRO_1000193995" description="Large ribosomal subunit protein uL29">
    <location>
        <begin position="1"/>
        <end position="66"/>
    </location>
</feature>